<comment type="function">
    <text evidence="1">Required for rescue of stalled ribosomes mediated by trans-translation. Binds to transfer-messenger RNA (tmRNA), required for stable association of tmRNA with ribosomes. tmRNA and SmpB together mimic tRNA shape, replacing the anticodon stem-loop with SmpB. tmRNA is encoded by the ssrA gene; the 2 termini fold to resemble tRNA(Ala) and it encodes a 'tag peptide', a short internal open reading frame. During trans-translation Ala-aminoacylated tmRNA acts like a tRNA, entering the A-site of stalled ribosomes, displacing the stalled mRNA. The ribosome then switches to translate the ORF on the tmRNA; the nascent peptide is terminated with the 'tag peptide' encoded by the tmRNA and targeted for degradation. The ribosome is freed to recommence translation, which seems to be the essential function of trans-translation.</text>
</comment>
<comment type="subcellular location">
    <subcellularLocation>
        <location evidence="1">Cytoplasm</location>
    </subcellularLocation>
    <text evidence="1">The tmRNA-SmpB complex associates with stalled 70S ribosomes.</text>
</comment>
<comment type="similarity">
    <text evidence="1">Belongs to the SmpB family.</text>
</comment>
<name>SSRP_STRS7</name>
<sequence length="155" mass="17728">MAKGEGNVLAQHKKARHDYHIVETVEAGIVLTGTEIKSVRAARIQLKDGFAQIKNGEAWLVNVHIAPFEQGNIWNADPERTRKLLLKKREIQHLADELKGTGMTLVPLKVYLKDGFAKVLIGLAKGKHDYDKRESIKRREQDRDIRRVMKSVNRR</sequence>
<protein>
    <recommendedName>
        <fullName evidence="1">SsrA-binding protein</fullName>
    </recommendedName>
    <alternativeName>
        <fullName evidence="1">Small protein B</fullName>
    </alternativeName>
</protein>
<gene>
    <name evidence="1" type="primary">smpB</name>
    <name type="ordered locus">SZO_05420</name>
</gene>
<reference key="1">
    <citation type="journal article" date="2009" name="PLoS Pathog.">
        <title>Genomic evidence for the evolution of Streptococcus equi: host restriction, increased virulence, and genetic exchange with human pathogens.</title>
        <authorList>
            <person name="Holden M.T.G."/>
            <person name="Heather Z."/>
            <person name="Paillot R."/>
            <person name="Steward K.F."/>
            <person name="Webb K."/>
            <person name="Ainslie F."/>
            <person name="Jourdan T."/>
            <person name="Bason N.C."/>
            <person name="Holroyd N.E."/>
            <person name="Mungall K."/>
            <person name="Quail M.A."/>
            <person name="Sanders M."/>
            <person name="Simmonds M."/>
            <person name="Willey D."/>
            <person name="Brooks K."/>
            <person name="Aanensen D.M."/>
            <person name="Spratt B.G."/>
            <person name="Jolley K.A."/>
            <person name="Maiden M.C.J."/>
            <person name="Kehoe M."/>
            <person name="Chanter N."/>
            <person name="Bentley S.D."/>
            <person name="Robinson C."/>
            <person name="Maskell D.J."/>
            <person name="Parkhill J."/>
            <person name="Waller A.S."/>
        </authorList>
    </citation>
    <scope>NUCLEOTIDE SEQUENCE [LARGE SCALE GENOMIC DNA]</scope>
    <source>
        <strain>H70</strain>
    </source>
</reference>
<evidence type="ECO:0000255" key="1">
    <source>
        <dbReference type="HAMAP-Rule" id="MF_00023"/>
    </source>
</evidence>
<proteinExistence type="inferred from homology"/>
<accession>C0MCH3</accession>
<organism>
    <name type="scientific">Streptococcus equi subsp. zooepidemicus (strain H70)</name>
    <dbReference type="NCBI Taxonomy" id="553483"/>
    <lineage>
        <taxon>Bacteria</taxon>
        <taxon>Bacillati</taxon>
        <taxon>Bacillota</taxon>
        <taxon>Bacilli</taxon>
        <taxon>Lactobacillales</taxon>
        <taxon>Streptococcaceae</taxon>
        <taxon>Streptococcus</taxon>
    </lineage>
</organism>
<feature type="chain" id="PRO_1000201942" description="SsrA-binding protein">
    <location>
        <begin position="1"/>
        <end position="155"/>
    </location>
</feature>
<dbReference type="EMBL" id="FM204884">
    <property type="protein sequence ID" value="CAW98529.1"/>
    <property type="molecule type" value="Genomic_DNA"/>
</dbReference>
<dbReference type="SMR" id="C0MCH3"/>
<dbReference type="KEGG" id="seq:SZO_05420"/>
<dbReference type="eggNOG" id="COG0691">
    <property type="taxonomic scope" value="Bacteria"/>
</dbReference>
<dbReference type="HOGENOM" id="CLU_108953_0_0_9"/>
<dbReference type="Proteomes" id="UP000001368">
    <property type="component" value="Chromosome"/>
</dbReference>
<dbReference type="GO" id="GO:0005829">
    <property type="term" value="C:cytosol"/>
    <property type="evidence" value="ECO:0007669"/>
    <property type="project" value="TreeGrafter"/>
</dbReference>
<dbReference type="GO" id="GO:0003723">
    <property type="term" value="F:RNA binding"/>
    <property type="evidence" value="ECO:0007669"/>
    <property type="project" value="UniProtKB-UniRule"/>
</dbReference>
<dbReference type="GO" id="GO:0070929">
    <property type="term" value="P:trans-translation"/>
    <property type="evidence" value="ECO:0007669"/>
    <property type="project" value="UniProtKB-UniRule"/>
</dbReference>
<dbReference type="CDD" id="cd09294">
    <property type="entry name" value="SmpB"/>
    <property type="match status" value="1"/>
</dbReference>
<dbReference type="Gene3D" id="2.40.280.10">
    <property type="match status" value="1"/>
</dbReference>
<dbReference type="HAMAP" id="MF_00023">
    <property type="entry name" value="SmpB"/>
    <property type="match status" value="1"/>
</dbReference>
<dbReference type="InterPro" id="IPR023620">
    <property type="entry name" value="SmpB"/>
</dbReference>
<dbReference type="InterPro" id="IPR000037">
    <property type="entry name" value="SsrA-bd_prot"/>
</dbReference>
<dbReference type="InterPro" id="IPR020081">
    <property type="entry name" value="SsrA-bd_prot_CS"/>
</dbReference>
<dbReference type="NCBIfam" id="NF003843">
    <property type="entry name" value="PRK05422.1"/>
    <property type="match status" value="1"/>
</dbReference>
<dbReference type="NCBIfam" id="TIGR00086">
    <property type="entry name" value="smpB"/>
    <property type="match status" value="1"/>
</dbReference>
<dbReference type="PANTHER" id="PTHR30308:SF2">
    <property type="entry name" value="SSRA-BINDING PROTEIN"/>
    <property type="match status" value="1"/>
</dbReference>
<dbReference type="PANTHER" id="PTHR30308">
    <property type="entry name" value="TMRNA-BINDING COMPONENT OF TRANS-TRANSLATION TAGGING COMPLEX"/>
    <property type="match status" value="1"/>
</dbReference>
<dbReference type="Pfam" id="PF01668">
    <property type="entry name" value="SmpB"/>
    <property type="match status" value="1"/>
</dbReference>
<dbReference type="SUPFAM" id="SSF74982">
    <property type="entry name" value="Small protein B (SmpB)"/>
    <property type="match status" value="1"/>
</dbReference>
<dbReference type="PROSITE" id="PS01317">
    <property type="entry name" value="SSRP"/>
    <property type="match status" value="1"/>
</dbReference>
<keyword id="KW-0963">Cytoplasm</keyword>
<keyword id="KW-0694">RNA-binding</keyword>